<name>ARP1_METGA</name>
<accession>A0A0B4H2J9</accession>
<sequence>MSQSLTSSVETDSKTGSSKAISFQDYLDLSALDWARLRAILAPTLYVDYTKIGKEKWDAMSADDFMAMVSNDDFLGDPCVKTQHLIGATYWERVSESKVIGHHQLRAAHQVYTSPDLKTVKLRGHSHATNEHYYVKSSGVWKFAGLKPEVRWNEYKFEEVFKGSYTQSEKQS</sequence>
<proteinExistence type="inferred from homology"/>
<dbReference type="EC" id="4.2.1.-" evidence="5"/>
<dbReference type="EMBL" id="AZNH01000023">
    <property type="protein sequence ID" value="KID86242.1"/>
    <property type="molecule type" value="Genomic_DNA"/>
</dbReference>
<dbReference type="SMR" id="A0A0B4H2J9"/>
<dbReference type="HOGENOM" id="CLU_101889_1_0_1"/>
<dbReference type="OrthoDB" id="2686at5529"/>
<dbReference type="Proteomes" id="UP000031192">
    <property type="component" value="Unassembled WGS sequence"/>
</dbReference>
<dbReference type="GO" id="GO:0030411">
    <property type="term" value="F:scytalone dehydratase activity"/>
    <property type="evidence" value="ECO:0007669"/>
    <property type="project" value="InterPro"/>
</dbReference>
<dbReference type="GO" id="GO:0006582">
    <property type="term" value="P:melanin metabolic process"/>
    <property type="evidence" value="ECO:0007669"/>
    <property type="project" value="InterPro"/>
</dbReference>
<dbReference type="Gene3D" id="3.10.450.50">
    <property type="match status" value="1"/>
</dbReference>
<dbReference type="InterPro" id="IPR032710">
    <property type="entry name" value="NTF2-like_dom_sf"/>
</dbReference>
<dbReference type="InterPro" id="IPR004235">
    <property type="entry name" value="Scytalone_dehydratase"/>
</dbReference>
<dbReference type="InterPro" id="IPR049884">
    <property type="entry name" value="Scytalone_dh"/>
</dbReference>
<dbReference type="Pfam" id="PF02982">
    <property type="entry name" value="Scytalone_dh"/>
    <property type="match status" value="1"/>
</dbReference>
<dbReference type="PIRSF" id="PIRSF024851">
    <property type="entry name" value="SCD1"/>
    <property type="match status" value="1"/>
</dbReference>
<dbReference type="SUPFAM" id="SSF54427">
    <property type="entry name" value="NTF2-like"/>
    <property type="match status" value="1"/>
</dbReference>
<keyword id="KW-0456">Lyase</keyword>
<gene>
    <name evidence="3" type="primary">Arp1</name>
    <name type="ORF">MGU_06675</name>
</gene>
<evidence type="ECO:0000250" key="1">
    <source>
        <dbReference type="UniProtKB" id="P56221"/>
    </source>
</evidence>
<evidence type="ECO:0000269" key="2">
    <source>
    </source>
</evidence>
<evidence type="ECO:0000303" key="3">
    <source>
    </source>
</evidence>
<evidence type="ECO:0000305" key="4"/>
<evidence type="ECO:0000305" key="5">
    <source>
    </source>
</evidence>
<organism>
    <name type="scientific">Metarhizium guizhouense (strain ARSEF 977)</name>
    <dbReference type="NCBI Taxonomy" id="1276136"/>
    <lineage>
        <taxon>Eukaryota</taxon>
        <taxon>Fungi</taxon>
        <taxon>Dikarya</taxon>
        <taxon>Ascomycota</taxon>
        <taxon>Pezizomycotina</taxon>
        <taxon>Sordariomycetes</taxon>
        <taxon>Hypocreomycetidae</taxon>
        <taxon>Hypocreales</taxon>
        <taxon>Clavicipitaceae</taxon>
        <taxon>Metarhizium</taxon>
    </lineage>
</organism>
<protein>
    <recommendedName>
        <fullName evidence="5">Scytalone dehydratase-like protein Arp1</fullName>
        <ecNumber evidence="5">4.2.1.-</ecNumber>
    </recommendedName>
</protein>
<feature type="chain" id="PRO_0000445915" description="Scytalone dehydratase-like protein Arp1">
    <location>
        <begin position="1"/>
        <end position="172"/>
    </location>
</feature>
<feature type="active site" evidence="1">
    <location>
        <position position="84"/>
    </location>
</feature>
<feature type="active site" evidence="1">
    <location>
        <position position="109"/>
    </location>
</feature>
<feature type="binding site" evidence="1">
    <location>
        <position position="49"/>
    </location>
    <ligand>
        <name>substrate</name>
    </ligand>
</feature>
<feature type="binding site" evidence="1">
    <location>
        <position position="130"/>
    </location>
    <ligand>
        <name>substrate</name>
    </ligand>
</feature>
<comment type="function">
    <text evidence="2">Scytalone dehydratase-like protein; part of the Pks2 gene cluster that mediates the formation of infectious structures (appressoria), enabling these fungi to kill insects faster (PubMed:29958281). The product of the Pks2 gene cluster is different from the one of Pks1 and has still not been identified (PubMed:29958281).</text>
</comment>
<comment type="subunit">
    <text evidence="1">Homotrimer. Each subunit contains an active site, located in the central part of the hydrophobic core of the monomer, which functions independently.</text>
</comment>
<comment type="similarity">
    <text evidence="4">Belongs to the scytalone dehydratase family.</text>
</comment>
<reference key="1">
    <citation type="journal article" date="2014" name="Proc. Natl. Acad. Sci. U.S.A.">
        <title>Trajectory and genomic determinants of fungal-pathogen speciation and host adaptation.</title>
        <authorList>
            <person name="Hu X."/>
            <person name="Xiao G."/>
            <person name="Zheng P."/>
            <person name="Shang Y."/>
            <person name="Su Y."/>
            <person name="Zhang X."/>
            <person name="Liu X."/>
            <person name="Zhan S."/>
            <person name="St Leger R.J."/>
            <person name="Wang C."/>
        </authorList>
    </citation>
    <scope>NUCLEOTIDE SEQUENCE [LARGE SCALE GENOMIC DNA]</scope>
    <source>
        <strain>ARSEF 977</strain>
    </source>
</reference>
<reference key="2">
    <citation type="journal article" date="2018" name="PLoS Genet.">
        <title>Duplication of a Pks gene cluster and subsequent functional diversification facilitate environmental adaptation in Metarhizium species.</title>
        <authorList>
            <person name="Zeng G."/>
            <person name="Zhang P."/>
            <person name="Zhang Q."/>
            <person name="Zhao H."/>
            <person name="Li Z."/>
            <person name="Zhang X."/>
            <person name="Wang C."/>
            <person name="Yin W.B."/>
            <person name="Fang W."/>
        </authorList>
    </citation>
    <scope>IDENTIFICATION</scope>
    <scope>FUNCTION</scope>
</reference>